<organism>
    <name type="scientific">Pseudomonas putida (strain GB-1)</name>
    <dbReference type="NCBI Taxonomy" id="76869"/>
    <lineage>
        <taxon>Bacteria</taxon>
        <taxon>Pseudomonadati</taxon>
        <taxon>Pseudomonadota</taxon>
        <taxon>Gammaproteobacteria</taxon>
        <taxon>Pseudomonadales</taxon>
        <taxon>Pseudomonadaceae</taxon>
        <taxon>Pseudomonas</taxon>
    </lineage>
</organism>
<keyword id="KW-0056">Arginine metabolism</keyword>
<keyword id="KW-0378">Hydrolase</keyword>
<keyword id="KW-0479">Metal-binding</keyword>
<keyword id="KW-0862">Zinc</keyword>
<protein>
    <recommendedName>
        <fullName evidence="1">Succinylglutamate desuccinylase</fullName>
        <ecNumber evidence="1">3.5.1.96</ecNumber>
    </recommendedName>
</protein>
<reference key="1">
    <citation type="submission" date="2008-01" db="EMBL/GenBank/DDBJ databases">
        <title>Complete sequence of Pseudomonas putida GB-1.</title>
        <authorList>
            <consortium name="US DOE Joint Genome Institute"/>
            <person name="Copeland A."/>
            <person name="Lucas S."/>
            <person name="Lapidus A."/>
            <person name="Barry K."/>
            <person name="Glavina del Rio T."/>
            <person name="Dalin E."/>
            <person name="Tice H."/>
            <person name="Pitluck S."/>
            <person name="Bruce D."/>
            <person name="Goodwin L."/>
            <person name="Chertkov O."/>
            <person name="Brettin T."/>
            <person name="Detter J.C."/>
            <person name="Han C."/>
            <person name="Kuske C.R."/>
            <person name="Schmutz J."/>
            <person name="Larimer F."/>
            <person name="Land M."/>
            <person name="Hauser L."/>
            <person name="Kyrpides N."/>
            <person name="Kim E."/>
            <person name="McCarthy J.K."/>
            <person name="Richardson P."/>
        </authorList>
    </citation>
    <scope>NUCLEOTIDE SEQUENCE [LARGE SCALE GENOMIC DNA]</scope>
    <source>
        <strain>GB-1</strain>
    </source>
</reference>
<accession>B0KR44</accession>
<comment type="function">
    <text evidence="1">Transforms N(2)-succinylglutamate into succinate and glutamate.</text>
</comment>
<comment type="catalytic activity">
    <reaction evidence="1">
        <text>N-succinyl-L-glutamate + H2O = L-glutamate + succinate</text>
        <dbReference type="Rhea" id="RHEA:15169"/>
        <dbReference type="ChEBI" id="CHEBI:15377"/>
        <dbReference type="ChEBI" id="CHEBI:29985"/>
        <dbReference type="ChEBI" id="CHEBI:30031"/>
        <dbReference type="ChEBI" id="CHEBI:58763"/>
        <dbReference type="EC" id="3.5.1.96"/>
    </reaction>
</comment>
<comment type="cofactor">
    <cofactor evidence="1">
        <name>Zn(2+)</name>
        <dbReference type="ChEBI" id="CHEBI:29105"/>
    </cofactor>
    <text evidence="1">Binds 1 zinc ion per subunit.</text>
</comment>
<comment type="pathway">
    <text evidence="1">Amino-acid degradation; L-arginine degradation via AST pathway; L-glutamate and succinate from L-arginine: step 5/5.</text>
</comment>
<comment type="similarity">
    <text evidence="1">Belongs to the AspA/AstE family. Succinylglutamate desuccinylase subfamily.</text>
</comment>
<dbReference type="EC" id="3.5.1.96" evidence="1"/>
<dbReference type="EMBL" id="CP000926">
    <property type="protein sequence ID" value="ABY99870.1"/>
    <property type="molecule type" value="Genomic_DNA"/>
</dbReference>
<dbReference type="RefSeq" id="WP_012273558.1">
    <property type="nucleotide sequence ID" value="NC_010322.1"/>
</dbReference>
<dbReference type="SMR" id="B0KR44"/>
<dbReference type="KEGG" id="ppg:PputGB1_3980"/>
<dbReference type="eggNOG" id="COG2988">
    <property type="taxonomic scope" value="Bacteria"/>
</dbReference>
<dbReference type="HOGENOM" id="CLU_071608_0_0_6"/>
<dbReference type="UniPathway" id="UPA00185">
    <property type="reaction ID" value="UER00283"/>
</dbReference>
<dbReference type="Proteomes" id="UP000002157">
    <property type="component" value="Chromosome"/>
</dbReference>
<dbReference type="GO" id="GO:0016788">
    <property type="term" value="F:hydrolase activity, acting on ester bonds"/>
    <property type="evidence" value="ECO:0007669"/>
    <property type="project" value="UniProtKB-UniRule"/>
</dbReference>
<dbReference type="GO" id="GO:0009017">
    <property type="term" value="F:succinylglutamate desuccinylase activity"/>
    <property type="evidence" value="ECO:0007669"/>
    <property type="project" value="UniProtKB-EC"/>
</dbReference>
<dbReference type="GO" id="GO:0008270">
    <property type="term" value="F:zinc ion binding"/>
    <property type="evidence" value="ECO:0007669"/>
    <property type="project" value="UniProtKB-UniRule"/>
</dbReference>
<dbReference type="GO" id="GO:0019544">
    <property type="term" value="P:arginine catabolic process to glutamate"/>
    <property type="evidence" value="ECO:0007669"/>
    <property type="project" value="UniProtKB-UniRule"/>
</dbReference>
<dbReference type="GO" id="GO:0019545">
    <property type="term" value="P:arginine catabolic process to succinate"/>
    <property type="evidence" value="ECO:0007669"/>
    <property type="project" value="UniProtKB-UniRule"/>
</dbReference>
<dbReference type="CDD" id="cd03855">
    <property type="entry name" value="M14_ASTE"/>
    <property type="match status" value="1"/>
</dbReference>
<dbReference type="Gene3D" id="3.40.630.10">
    <property type="entry name" value="Zn peptidases"/>
    <property type="match status" value="1"/>
</dbReference>
<dbReference type="HAMAP" id="MF_00767">
    <property type="entry name" value="Arg_catab_AstE"/>
    <property type="match status" value="1"/>
</dbReference>
<dbReference type="InterPro" id="IPR050178">
    <property type="entry name" value="AspA/AstE_fam"/>
</dbReference>
<dbReference type="InterPro" id="IPR055438">
    <property type="entry name" value="AstE_AspA_cat"/>
</dbReference>
<dbReference type="InterPro" id="IPR007036">
    <property type="entry name" value="Aste_AspA_hybrid_dom"/>
</dbReference>
<dbReference type="InterPro" id="IPR016681">
    <property type="entry name" value="SuccinylGlu_desuccinylase"/>
</dbReference>
<dbReference type="NCBIfam" id="TIGR03242">
    <property type="entry name" value="arg_catab_astE"/>
    <property type="match status" value="1"/>
</dbReference>
<dbReference type="NCBIfam" id="NF003706">
    <property type="entry name" value="PRK05324.1"/>
    <property type="match status" value="1"/>
</dbReference>
<dbReference type="PANTHER" id="PTHR15162">
    <property type="entry name" value="ASPARTOACYLASE"/>
    <property type="match status" value="1"/>
</dbReference>
<dbReference type="PANTHER" id="PTHR15162:SF7">
    <property type="entry name" value="SUCCINYLGLUTAMATE DESUCCINYLASE"/>
    <property type="match status" value="1"/>
</dbReference>
<dbReference type="Pfam" id="PF24827">
    <property type="entry name" value="AstE_AspA_cat"/>
    <property type="match status" value="1"/>
</dbReference>
<dbReference type="Pfam" id="PF04952">
    <property type="entry name" value="AstE_AspA_hybrid"/>
    <property type="match status" value="1"/>
</dbReference>
<dbReference type="PIRSF" id="PIRSF017020">
    <property type="entry name" value="AstE"/>
    <property type="match status" value="1"/>
</dbReference>
<dbReference type="SUPFAM" id="SSF53187">
    <property type="entry name" value="Zn-dependent exopeptidases"/>
    <property type="match status" value="1"/>
</dbReference>
<sequence>MLALGKLLELTLTDHEPAEKTQVTPKGARLRWLGEGALEVRPAESEDCGLDLLLSAGIHGNETAPIELLERLLHGVANGKIKPRARLLFLFGNPVAIRKGERFIEQDINRLFNGRHELSSGFEALRAAELEQFARVFFSKPGRSRLHYDLHTAIRGSKIEQFALYPYKEGRKHSRRELARLAAAGMEAVLLQSKSSITFSAFTYEQLDAEAFTLELGKARPFGQNEQVNLDKLEERLIRIIEATEPEGESSLDGLQLFSVSREIIKHSDSFHLHLPADIENFSELSKGYLLAEDLAEMRWVVEEEGARIIFPNPKVRNGLRAGILIVPDSGQRLG</sequence>
<feature type="chain" id="PRO_1000083545" description="Succinylglutamate desuccinylase">
    <location>
        <begin position="1"/>
        <end position="335"/>
    </location>
</feature>
<feature type="active site" evidence="1">
    <location>
        <position position="215"/>
    </location>
</feature>
<feature type="binding site" evidence="1">
    <location>
        <position position="59"/>
    </location>
    <ligand>
        <name>Zn(2+)</name>
        <dbReference type="ChEBI" id="CHEBI:29105"/>
    </ligand>
</feature>
<feature type="binding site" evidence="1">
    <location>
        <position position="62"/>
    </location>
    <ligand>
        <name>Zn(2+)</name>
        <dbReference type="ChEBI" id="CHEBI:29105"/>
    </ligand>
</feature>
<feature type="binding site" evidence="1">
    <location>
        <position position="151"/>
    </location>
    <ligand>
        <name>Zn(2+)</name>
        <dbReference type="ChEBI" id="CHEBI:29105"/>
    </ligand>
</feature>
<gene>
    <name evidence="1" type="primary">astE</name>
    <name type="ordered locus">PputGB1_3980</name>
</gene>
<evidence type="ECO:0000255" key="1">
    <source>
        <dbReference type="HAMAP-Rule" id="MF_00767"/>
    </source>
</evidence>
<name>ASTE_PSEPG</name>
<proteinExistence type="inferred from homology"/>